<evidence type="ECO:0000255" key="1">
    <source>
        <dbReference type="HAMAP-Rule" id="MF_00350"/>
    </source>
</evidence>
<dbReference type="EMBL" id="CP000745">
    <property type="protein sequence ID" value="ABR66698.1"/>
    <property type="molecule type" value="Genomic_DNA"/>
</dbReference>
<dbReference type="SMR" id="A6VJS2"/>
<dbReference type="STRING" id="426368.MmarC7_1640"/>
<dbReference type="KEGG" id="mmz:MmarC7_1640"/>
<dbReference type="eggNOG" id="arCOG00417">
    <property type="taxonomic scope" value="Archaea"/>
</dbReference>
<dbReference type="HOGENOM" id="CLU_041732_2_0_2"/>
<dbReference type="OrthoDB" id="17644at2157"/>
<dbReference type="GO" id="GO:0005524">
    <property type="term" value="F:ATP binding"/>
    <property type="evidence" value="ECO:0007669"/>
    <property type="project" value="UniProtKB-UniRule"/>
</dbReference>
<dbReference type="GO" id="GO:0016887">
    <property type="term" value="F:ATP hydrolysis activity"/>
    <property type="evidence" value="ECO:0007669"/>
    <property type="project" value="InterPro"/>
</dbReference>
<dbReference type="GO" id="GO:0140664">
    <property type="term" value="F:ATP-dependent DNA damage sensor activity"/>
    <property type="evidence" value="ECO:0007669"/>
    <property type="project" value="InterPro"/>
</dbReference>
<dbReference type="GO" id="GO:0003684">
    <property type="term" value="F:damaged DNA binding"/>
    <property type="evidence" value="ECO:0007669"/>
    <property type="project" value="UniProtKB-UniRule"/>
</dbReference>
<dbReference type="GO" id="GO:0006310">
    <property type="term" value="P:DNA recombination"/>
    <property type="evidence" value="ECO:0007669"/>
    <property type="project" value="UniProtKB-UniRule"/>
</dbReference>
<dbReference type="GO" id="GO:0006281">
    <property type="term" value="P:DNA repair"/>
    <property type="evidence" value="ECO:0007669"/>
    <property type="project" value="UniProtKB-UniRule"/>
</dbReference>
<dbReference type="Gene3D" id="3.40.50.300">
    <property type="entry name" value="P-loop containing nucleotide triphosphate hydrolases"/>
    <property type="match status" value="1"/>
</dbReference>
<dbReference type="HAMAP" id="MF_00350">
    <property type="entry name" value="RadB"/>
    <property type="match status" value="1"/>
</dbReference>
<dbReference type="InterPro" id="IPR003593">
    <property type="entry name" value="AAA+_ATPase"/>
</dbReference>
<dbReference type="InterPro" id="IPR013632">
    <property type="entry name" value="DNA_recomb/repair_Rad51_C"/>
</dbReference>
<dbReference type="InterPro" id="IPR011939">
    <property type="entry name" value="DNA_repair_and_recomb_RadB"/>
</dbReference>
<dbReference type="InterPro" id="IPR027417">
    <property type="entry name" value="P-loop_NTPase"/>
</dbReference>
<dbReference type="InterPro" id="IPR020588">
    <property type="entry name" value="RecA_ATP-bd"/>
</dbReference>
<dbReference type="NCBIfam" id="TIGR02237">
    <property type="entry name" value="recomb_radB"/>
    <property type="match status" value="1"/>
</dbReference>
<dbReference type="PANTHER" id="PTHR22942:SF47">
    <property type="entry name" value="DNA REPAIR AND RECOMBINATION PROTEIN RADB"/>
    <property type="match status" value="1"/>
</dbReference>
<dbReference type="PANTHER" id="PTHR22942">
    <property type="entry name" value="RECA/RAD51/RADA DNA STRAND-PAIRING FAMILY MEMBER"/>
    <property type="match status" value="1"/>
</dbReference>
<dbReference type="Pfam" id="PF08423">
    <property type="entry name" value="Rad51"/>
    <property type="match status" value="1"/>
</dbReference>
<dbReference type="PIRSF" id="PIRSF003336">
    <property type="entry name" value="RadB"/>
    <property type="match status" value="1"/>
</dbReference>
<dbReference type="SMART" id="SM00382">
    <property type="entry name" value="AAA"/>
    <property type="match status" value="1"/>
</dbReference>
<dbReference type="SUPFAM" id="SSF52540">
    <property type="entry name" value="P-loop containing nucleoside triphosphate hydrolases"/>
    <property type="match status" value="1"/>
</dbReference>
<dbReference type="PROSITE" id="PS50162">
    <property type="entry name" value="RECA_2"/>
    <property type="match status" value="1"/>
</dbReference>
<comment type="function">
    <text evidence="1">Involved in DNA repair and in homologous recombination. May regulate the cleavage reactions of the branch-structured DNA. Has a very weak ATPase activity that is not stimulated by DNA. Binds DNA but does not promote DNA strands exchange.</text>
</comment>
<comment type="similarity">
    <text evidence="1">Belongs to the eukaryotic RecA-like protein family. RadB subfamily.</text>
</comment>
<accession>A6VJS2</accession>
<reference key="1">
    <citation type="submission" date="2007-06" db="EMBL/GenBank/DDBJ databases">
        <title>Complete sequence of Methanococcus maripaludis C7.</title>
        <authorList>
            <consortium name="US DOE Joint Genome Institute"/>
            <person name="Copeland A."/>
            <person name="Lucas S."/>
            <person name="Lapidus A."/>
            <person name="Barry K."/>
            <person name="Glavina del Rio T."/>
            <person name="Dalin E."/>
            <person name="Tice H."/>
            <person name="Pitluck S."/>
            <person name="Clum A."/>
            <person name="Schmutz J."/>
            <person name="Larimer F."/>
            <person name="Land M."/>
            <person name="Hauser L."/>
            <person name="Kyrpides N."/>
            <person name="Anderson I."/>
            <person name="Sieprawska-Lupa M."/>
            <person name="Whitman W.B."/>
            <person name="Richardson P."/>
        </authorList>
    </citation>
    <scope>NUCLEOTIDE SEQUENCE [LARGE SCALE GENOMIC DNA]</scope>
    <source>
        <strain>C7 / ATCC BAA-1331</strain>
    </source>
</reference>
<sequence>MLEELLNGNIEKKTITQIYGPPGVGKTNICILSMLNAIENGKSVVYIDTEGSLSIERIKQLSGKNCEELLKNIIIYEPSTFEEQSEALEKIFLLENIGLIIIDGIVSLYRLELCDNINENTKLNRMLGKQISNLLKVARKKNSGILITNQVKDSANGIEPAGGRLLEYWSKSIIKLEKAESVRKLTLEKHRHAKEGENLRFRILQNGLEIINKSY</sequence>
<name>RADB_METM7</name>
<protein>
    <recommendedName>
        <fullName evidence="1">DNA repair and recombination protein RadB</fullName>
    </recommendedName>
</protein>
<gene>
    <name evidence="1" type="primary">radB</name>
    <name type="ordered locus">MmarC7_1640</name>
</gene>
<feature type="chain" id="PRO_1000006933" description="DNA repair and recombination protein RadB">
    <location>
        <begin position="1"/>
        <end position="215"/>
    </location>
</feature>
<keyword id="KW-0067">ATP-binding</keyword>
<keyword id="KW-0227">DNA damage</keyword>
<keyword id="KW-0233">DNA recombination</keyword>
<keyword id="KW-0238">DNA-binding</keyword>
<keyword id="KW-0547">Nucleotide-binding</keyword>
<proteinExistence type="inferred from homology"/>
<organism>
    <name type="scientific">Methanococcus maripaludis (strain C7 / ATCC BAA-1331)</name>
    <dbReference type="NCBI Taxonomy" id="426368"/>
    <lineage>
        <taxon>Archaea</taxon>
        <taxon>Methanobacteriati</taxon>
        <taxon>Methanobacteriota</taxon>
        <taxon>Methanomada group</taxon>
        <taxon>Methanococci</taxon>
        <taxon>Methanococcales</taxon>
        <taxon>Methanococcaceae</taxon>
        <taxon>Methanococcus</taxon>
    </lineage>
</organism>